<proteinExistence type="inferred from homology"/>
<feature type="chain" id="PRO_1000145137" description="Urease accessory protein UreF">
    <location>
        <begin position="1"/>
        <end position="223"/>
    </location>
</feature>
<reference key="1">
    <citation type="journal article" date="2010" name="Appl. Environ. Microbiol.">
        <title>Conserved symbiotic plasmid DNA sequences in the multireplicon pangenomic structure of Rhizobium etli.</title>
        <authorList>
            <person name="Gonzalez V."/>
            <person name="Acosta J.L."/>
            <person name="Santamaria R.I."/>
            <person name="Bustos P."/>
            <person name="Fernandez J.L."/>
            <person name="Hernandez Gonzalez I.L."/>
            <person name="Diaz R."/>
            <person name="Flores M."/>
            <person name="Palacios R."/>
            <person name="Mora J."/>
            <person name="Davila G."/>
        </authorList>
    </citation>
    <scope>NUCLEOTIDE SEQUENCE [LARGE SCALE GENOMIC DNA]</scope>
    <source>
        <strain>CIAT 652</strain>
    </source>
</reference>
<accession>B3PXA9</accession>
<keyword id="KW-0143">Chaperone</keyword>
<keyword id="KW-0963">Cytoplasm</keyword>
<keyword id="KW-0996">Nickel insertion</keyword>
<name>UREF_RHIE6</name>
<organism>
    <name type="scientific">Rhizobium etli (strain CIAT 652)</name>
    <dbReference type="NCBI Taxonomy" id="491916"/>
    <lineage>
        <taxon>Bacteria</taxon>
        <taxon>Pseudomonadati</taxon>
        <taxon>Pseudomonadota</taxon>
        <taxon>Alphaproteobacteria</taxon>
        <taxon>Hyphomicrobiales</taxon>
        <taxon>Rhizobiaceae</taxon>
        <taxon>Rhizobium/Agrobacterium group</taxon>
        <taxon>Rhizobium</taxon>
    </lineage>
</organism>
<evidence type="ECO:0000255" key="1">
    <source>
        <dbReference type="HAMAP-Rule" id="MF_01385"/>
    </source>
</evidence>
<sequence>MTGDRELQALLRLTAWLSPAFPIGGFAYSGGLERATADGLVIDAASLAAWIATLISHGSVWNDAVLLAESHRQQPSPAFLAEITALAEALAGSRERHQETMLLGDAFVAAARAWPDEVFERLPGKTAYPVAVGAVAGAHGIGLEKVLVAFLHAYASQAVSSGIRLGVAGQRDGVAVLAGLEEHIVEVARRAAASTLDELGSATVQADIASLRHETQTTRLFRS</sequence>
<dbReference type="EMBL" id="CP001074">
    <property type="protein sequence ID" value="ACE92490.1"/>
    <property type="molecule type" value="Genomic_DNA"/>
</dbReference>
<dbReference type="SMR" id="B3PXA9"/>
<dbReference type="KEGG" id="rec:RHECIAT_CH0003544"/>
<dbReference type="eggNOG" id="COG0830">
    <property type="taxonomic scope" value="Bacteria"/>
</dbReference>
<dbReference type="HOGENOM" id="CLU_049215_2_0_5"/>
<dbReference type="Proteomes" id="UP000008817">
    <property type="component" value="Chromosome"/>
</dbReference>
<dbReference type="GO" id="GO:0005737">
    <property type="term" value="C:cytoplasm"/>
    <property type="evidence" value="ECO:0007669"/>
    <property type="project" value="UniProtKB-SubCell"/>
</dbReference>
<dbReference type="GO" id="GO:0016151">
    <property type="term" value="F:nickel cation binding"/>
    <property type="evidence" value="ECO:0007669"/>
    <property type="project" value="UniProtKB-UniRule"/>
</dbReference>
<dbReference type="Gene3D" id="1.10.4190.10">
    <property type="entry name" value="Urease accessory protein UreF"/>
    <property type="match status" value="1"/>
</dbReference>
<dbReference type="HAMAP" id="MF_01385">
    <property type="entry name" value="UreF"/>
    <property type="match status" value="1"/>
</dbReference>
<dbReference type="InterPro" id="IPR002639">
    <property type="entry name" value="UreF"/>
</dbReference>
<dbReference type="InterPro" id="IPR038277">
    <property type="entry name" value="UreF_sf"/>
</dbReference>
<dbReference type="PANTHER" id="PTHR33620">
    <property type="entry name" value="UREASE ACCESSORY PROTEIN F"/>
    <property type="match status" value="1"/>
</dbReference>
<dbReference type="PANTHER" id="PTHR33620:SF1">
    <property type="entry name" value="UREASE ACCESSORY PROTEIN F"/>
    <property type="match status" value="1"/>
</dbReference>
<dbReference type="Pfam" id="PF01730">
    <property type="entry name" value="UreF"/>
    <property type="match status" value="1"/>
</dbReference>
<dbReference type="PIRSF" id="PIRSF009467">
    <property type="entry name" value="Ureas_acces_UreF"/>
    <property type="match status" value="1"/>
</dbReference>
<protein>
    <recommendedName>
        <fullName evidence="1">Urease accessory protein UreF</fullName>
    </recommendedName>
</protein>
<comment type="function">
    <text evidence="1">Required for maturation of urease via the functional incorporation of the urease nickel metallocenter.</text>
</comment>
<comment type="subunit">
    <text evidence="1">UreD, UreF and UreG form a complex that acts as a GTP-hydrolysis-dependent molecular chaperone, activating the urease apoprotein by helping to assemble the nickel containing metallocenter of UreC. The UreE protein probably delivers the nickel.</text>
</comment>
<comment type="subcellular location">
    <subcellularLocation>
        <location evidence="1">Cytoplasm</location>
    </subcellularLocation>
</comment>
<comment type="similarity">
    <text evidence="1">Belongs to the UreF family.</text>
</comment>
<gene>
    <name evidence="1" type="primary">ureF</name>
    <name type="ordered locus">RHECIAT_CH0003544</name>
</gene>